<name>HIP13_ARATH</name>
<sequence>MPPMKAVLQLSIHEERIRKKAFVTVSRCPGVTSITMDDKTGKMTVVGEVDVPVIVMKLRKLCNTELVSVEVVKPPEKKPEPEKPAPPKPAPAPAKPAEIVAWPVQMNNPYQYNPAYANSYYQPYGNSRFVTDESNCVIM</sequence>
<organism evidence="11">
    <name type="scientific">Arabidopsis thaliana</name>
    <name type="common">Mouse-ear cress</name>
    <dbReference type="NCBI Taxonomy" id="3702"/>
    <lineage>
        <taxon>Eukaryota</taxon>
        <taxon>Viridiplantae</taxon>
        <taxon>Streptophyta</taxon>
        <taxon>Embryophyta</taxon>
        <taxon>Tracheophyta</taxon>
        <taxon>Spermatophyta</taxon>
        <taxon>Magnoliopsida</taxon>
        <taxon>eudicotyledons</taxon>
        <taxon>Gunneridae</taxon>
        <taxon>Pentapetalae</taxon>
        <taxon>rosids</taxon>
        <taxon>malvids</taxon>
        <taxon>Brassicales</taxon>
        <taxon>Brassicaceae</taxon>
        <taxon>Camelineae</taxon>
        <taxon>Arabidopsis</taxon>
    </lineage>
</organism>
<feature type="chain" id="PRO_0000437815" description="Heavy metal-associated isoprenylated plant protein 13">
    <location>
        <begin position="1"/>
        <end position="136"/>
    </location>
</feature>
<feature type="propeptide" id="PRO_0000437816" description="Removed in mature form" evidence="7">
    <location>
        <begin position="137"/>
        <end position="139"/>
    </location>
</feature>
<feature type="domain" description="HMA" evidence="3">
    <location>
        <begin position="3"/>
        <end position="70"/>
    </location>
</feature>
<feature type="region of interest" description="Disordered" evidence="4">
    <location>
        <begin position="70"/>
        <end position="94"/>
    </location>
</feature>
<feature type="compositionally biased region" description="Basic and acidic residues" evidence="4">
    <location>
        <begin position="73"/>
        <end position="85"/>
    </location>
</feature>
<feature type="modified residue" description="Cysteine methyl ester" evidence="2">
    <location>
        <position position="136"/>
    </location>
</feature>
<feature type="lipid moiety-binding region" description="S-farnesyl cysteine" evidence="2">
    <location>
        <position position="136"/>
    </location>
</feature>
<accession>Q9LTE2</accession>
<accession>Q8LDN0</accession>
<protein>
    <recommendedName>
        <fullName evidence="5 6">Heavy metal-associated isoprenylated plant protein 13</fullName>
        <shortName evidence="5 6">AtHIP13</shortName>
    </recommendedName>
</protein>
<comment type="function">
    <text evidence="1">Probable heavy-metal-binding protein.</text>
</comment>
<comment type="induction">
    <text evidence="6">Up-regulated by cadmium.</text>
</comment>
<comment type="similarity">
    <text evidence="7">Belongs to the HIPP family.</text>
</comment>
<comment type="caution">
    <text evidence="8">Contains an apparent HMA-like domain but lacks the core conserved Cys-X-X-Cys motif.</text>
</comment>
<comment type="sequence caution" evidence="7">
    <conflict type="erroneous initiation">
        <sequence resource="EMBL-CDS" id="AAM63117"/>
    </conflict>
    <text>Truncated N-terminus.</text>
</comment>
<keyword id="KW-0449">Lipoprotein</keyword>
<keyword id="KW-0479">Metal-binding</keyword>
<keyword id="KW-0488">Methylation</keyword>
<keyword id="KW-0636">Prenylation</keyword>
<keyword id="KW-1185">Reference proteome</keyword>
<gene>
    <name evidence="5 6" type="primary">HIPP13</name>
    <name evidence="9" type="ordered locus">At5g52750</name>
    <name evidence="11" type="ORF">F6N7.24</name>
</gene>
<dbReference type="EMBL" id="AF083736">
    <property type="protein sequence ID" value="AAN60294.1"/>
    <property type="molecule type" value="mRNA"/>
</dbReference>
<dbReference type="EMBL" id="AB025606">
    <property type="protein sequence ID" value="BAA98093.1"/>
    <property type="molecule type" value="Genomic_DNA"/>
</dbReference>
<dbReference type="EMBL" id="CP002688">
    <property type="protein sequence ID" value="AED96256.1"/>
    <property type="molecule type" value="Genomic_DNA"/>
</dbReference>
<dbReference type="EMBL" id="AK117134">
    <property type="protein sequence ID" value="BAC41812.1"/>
    <property type="molecule type" value="mRNA"/>
</dbReference>
<dbReference type="EMBL" id="BT003668">
    <property type="protein sequence ID" value="AAO39896.1"/>
    <property type="molecule type" value="mRNA"/>
</dbReference>
<dbReference type="EMBL" id="BT025501">
    <property type="protein sequence ID" value="ABF58919.1"/>
    <property type="molecule type" value="mRNA"/>
</dbReference>
<dbReference type="EMBL" id="AY085905">
    <property type="protein sequence ID" value="AAM63117.1"/>
    <property type="status" value="ALT_INIT"/>
    <property type="molecule type" value="mRNA"/>
</dbReference>
<dbReference type="RefSeq" id="NP_200087.1">
    <property type="nucleotide sequence ID" value="NM_124653.4"/>
</dbReference>
<dbReference type="SMR" id="Q9LTE2"/>
<dbReference type="FunCoup" id="Q9LTE2">
    <property type="interactions" value="12"/>
</dbReference>
<dbReference type="IntAct" id="Q9LTE2">
    <property type="interactions" value="1"/>
</dbReference>
<dbReference type="STRING" id="3702.Q9LTE2"/>
<dbReference type="PaxDb" id="3702-AT5G52750.1"/>
<dbReference type="ProteomicsDB" id="230349"/>
<dbReference type="EnsemblPlants" id="AT5G52750.1">
    <property type="protein sequence ID" value="AT5G52750.1"/>
    <property type="gene ID" value="AT5G52750"/>
</dbReference>
<dbReference type="GeneID" id="835352"/>
<dbReference type="Gramene" id="AT5G52750.1">
    <property type="protein sequence ID" value="AT5G52750.1"/>
    <property type="gene ID" value="AT5G52750"/>
</dbReference>
<dbReference type="KEGG" id="ath:AT5G52750"/>
<dbReference type="Araport" id="AT5G52750"/>
<dbReference type="TAIR" id="AT5G52750"/>
<dbReference type="HOGENOM" id="CLU_092610_3_3_1"/>
<dbReference type="InParanoid" id="Q9LTE2"/>
<dbReference type="OMA" id="YHPAYAN"/>
<dbReference type="OrthoDB" id="1111409at2759"/>
<dbReference type="PhylomeDB" id="Q9LTE2"/>
<dbReference type="PRO" id="PR:Q9LTE2"/>
<dbReference type="Proteomes" id="UP000006548">
    <property type="component" value="Chromosome 5"/>
</dbReference>
<dbReference type="ExpressionAtlas" id="Q9LTE2">
    <property type="expression patterns" value="baseline and differential"/>
</dbReference>
<dbReference type="GO" id="GO:0046872">
    <property type="term" value="F:metal ion binding"/>
    <property type="evidence" value="ECO:0007669"/>
    <property type="project" value="UniProtKB-KW"/>
</dbReference>
<dbReference type="Gene3D" id="3.30.70.100">
    <property type="match status" value="1"/>
</dbReference>
<dbReference type="InterPro" id="IPR051863">
    <property type="entry name" value="HIPP"/>
</dbReference>
<dbReference type="InterPro" id="IPR006121">
    <property type="entry name" value="HMA_dom"/>
</dbReference>
<dbReference type="PANTHER" id="PTHR45811">
    <property type="entry name" value="COPPER TRANSPORT PROTEIN FAMILY-RELATED"/>
    <property type="match status" value="1"/>
</dbReference>
<dbReference type="PANTHER" id="PTHR45811:SF80">
    <property type="entry name" value="COPPER TRANSPORT PROTEIN FAMILY-RELATED"/>
    <property type="match status" value="1"/>
</dbReference>
<dbReference type="PROSITE" id="PS50846">
    <property type="entry name" value="HMA_2"/>
    <property type="match status" value="1"/>
</dbReference>
<reference evidence="10" key="1">
    <citation type="submission" date="1998-08" db="EMBL/GenBank/DDBJ databases">
        <title>Signal peptide selection derived cDNAs from Arabidopsis thaliana leaves and guard cells.</title>
        <authorList>
            <person name="Stracke R."/>
            <person name="Palme K."/>
        </authorList>
    </citation>
    <scope>NUCLEOTIDE SEQUENCE [MRNA]</scope>
</reference>
<reference key="2">
    <citation type="submission" date="1999-04" db="EMBL/GenBank/DDBJ databases">
        <title>Structural analysis of Arabidopsis thaliana chromosome 5. XI.</title>
        <authorList>
            <person name="Kaneko T."/>
            <person name="Katoh T."/>
            <person name="Asamizu E."/>
            <person name="Sato S."/>
            <person name="Nakamura Y."/>
            <person name="Kotani H."/>
            <person name="Tabata S."/>
        </authorList>
    </citation>
    <scope>NUCLEOTIDE SEQUENCE [LARGE SCALE GENOMIC DNA]</scope>
    <source>
        <strain>cv. Columbia</strain>
    </source>
</reference>
<reference key="3">
    <citation type="journal article" date="2017" name="Plant J.">
        <title>Araport11: a complete reannotation of the Arabidopsis thaliana reference genome.</title>
        <authorList>
            <person name="Cheng C.Y."/>
            <person name="Krishnakumar V."/>
            <person name="Chan A.P."/>
            <person name="Thibaud-Nissen F."/>
            <person name="Schobel S."/>
            <person name="Town C.D."/>
        </authorList>
    </citation>
    <scope>GENOME REANNOTATION</scope>
    <source>
        <strain>cv. Columbia</strain>
    </source>
</reference>
<reference key="4">
    <citation type="journal article" date="2002" name="Science">
        <title>Functional annotation of a full-length Arabidopsis cDNA collection.</title>
        <authorList>
            <person name="Seki M."/>
            <person name="Narusaka M."/>
            <person name="Kamiya A."/>
            <person name="Ishida J."/>
            <person name="Satou M."/>
            <person name="Sakurai T."/>
            <person name="Nakajima M."/>
            <person name="Enju A."/>
            <person name="Akiyama K."/>
            <person name="Oono Y."/>
            <person name="Muramatsu M."/>
            <person name="Hayashizaki Y."/>
            <person name="Kawai J."/>
            <person name="Carninci P."/>
            <person name="Itoh M."/>
            <person name="Ishii Y."/>
            <person name="Arakawa T."/>
            <person name="Shibata K."/>
            <person name="Shinagawa A."/>
            <person name="Shinozaki K."/>
        </authorList>
    </citation>
    <scope>NUCLEOTIDE SEQUENCE [LARGE SCALE MRNA]</scope>
    <source>
        <strain>cv. Columbia</strain>
    </source>
</reference>
<reference key="5">
    <citation type="journal article" date="2003" name="Science">
        <title>Empirical analysis of transcriptional activity in the Arabidopsis genome.</title>
        <authorList>
            <person name="Yamada K."/>
            <person name="Lim J."/>
            <person name="Dale J.M."/>
            <person name="Chen H."/>
            <person name="Shinn P."/>
            <person name="Palm C.J."/>
            <person name="Southwick A.M."/>
            <person name="Wu H.C."/>
            <person name="Kim C.J."/>
            <person name="Nguyen M."/>
            <person name="Pham P.K."/>
            <person name="Cheuk R.F."/>
            <person name="Karlin-Newmann G."/>
            <person name="Liu S.X."/>
            <person name="Lam B."/>
            <person name="Sakano H."/>
            <person name="Wu T."/>
            <person name="Yu G."/>
            <person name="Miranda M."/>
            <person name="Quach H.L."/>
            <person name="Tripp M."/>
            <person name="Chang C.H."/>
            <person name="Lee J.M."/>
            <person name="Toriumi M.J."/>
            <person name="Chan M.M."/>
            <person name="Tang C.C."/>
            <person name="Onodera C.S."/>
            <person name="Deng J.M."/>
            <person name="Akiyama K."/>
            <person name="Ansari Y."/>
            <person name="Arakawa T."/>
            <person name="Banh J."/>
            <person name="Banno F."/>
            <person name="Bowser L."/>
            <person name="Brooks S.Y."/>
            <person name="Carninci P."/>
            <person name="Chao Q."/>
            <person name="Choy N."/>
            <person name="Enju A."/>
            <person name="Goldsmith A.D."/>
            <person name="Gurjal M."/>
            <person name="Hansen N.F."/>
            <person name="Hayashizaki Y."/>
            <person name="Johnson-Hopson C."/>
            <person name="Hsuan V.W."/>
            <person name="Iida K."/>
            <person name="Karnes M."/>
            <person name="Khan S."/>
            <person name="Koesema E."/>
            <person name="Ishida J."/>
            <person name="Jiang P.X."/>
            <person name="Jones T."/>
            <person name="Kawai J."/>
            <person name="Kamiya A."/>
            <person name="Meyers C."/>
            <person name="Nakajima M."/>
            <person name="Narusaka M."/>
            <person name="Seki M."/>
            <person name="Sakurai T."/>
            <person name="Satou M."/>
            <person name="Tamse R."/>
            <person name="Vaysberg M."/>
            <person name="Wallender E.K."/>
            <person name="Wong C."/>
            <person name="Yamamura Y."/>
            <person name="Yuan S."/>
            <person name="Shinozaki K."/>
            <person name="Davis R.W."/>
            <person name="Theologis A."/>
            <person name="Ecker J.R."/>
        </authorList>
    </citation>
    <scope>NUCLEOTIDE SEQUENCE [LARGE SCALE MRNA]</scope>
    <source>
        <strain>cv. Columbia</strain>
    </source>
</reference>
<reference key="6">
    <citation type="submission" date="2006-05" db="EMBL/GenBank/DDBJ databases">
        <title>Arabidopsis ORF clones.</title>
        <authorList>
            <person name="Kim C.J."/>
            <person name="Chen H."/>
            <person name="Quinitio C."/>
            <person name="Shinn P."/>
            <person name="Ecker J.R."/>
        </authorList>
    </citation>
    <scope>NUCLEOTIDE SEQUENCE [LARGE SCALE MRNA]</scope>
    <source>
        <strain>cv. Columbia</strain>
    </source>
</reference>
<reference key="7">
    <citation type="submission" date="2002-03" db="EMBL/GenBank/DDBJ databases">
        <title>Full-length cDNA from Arabidopsis thaliana.</title>
        <authorList>
            <person name="Brover V.V."/>
            <person name="Troukhan M.E."/>
            <person name="Alexandrov N.A."/>
            <person name="Lu Y.-P."/>
            <person name="Flavell R.B."/>
            <person name="Feldmann K.A."/>
        </authorList>
    </citation>
    <scope>NUCLEOTIDE SEQUENCE [LARGE SCALE MRNA]</scope>
</reference>
<reference key="8">
    <citation type="journal article" date="2010" name="Metallomics">
        <title>Metallochaperone-like genes in Arabidopsis thaliana.</title>
        <authorList>
            <person name="Tehseen M."/>
            <person name="Cairns N."/>
            <person name="Sherson S."/>
            <person name="Cobbett C.S."/>
        </authorList>
    </citation>
    <scope>GENE FAMILY</scope>
    <scope>NOMENCLATURE</scope>
</reference>
<reference key="9">
    <citation type="journal article" date="2013" name="FEBS J.">
        <title>Heavy metal-associated isoprenylated plant protein (HIPP): characterization of a family of proteins exclusive to plants.</title>
        <authorList>
            <person name="de Abreu-Neto J.B."/>
            <person name="Turchetto-Zolet A.C."/>
            <person name="de Oliveira L.F."/>
            <person name="Zanettini M.H."/>
            <person name="Margis-Pinheiro M."/>
        </authorList>
    </citation>
    <scope>GENE FAMILY</scope>
    <scope>NOMENCLATURE</scope>
    <scope>INDUCTION BY CADMIUM</scope>
</reference>
<evidence type="ECO:0000250" key="1">
    <source>
        <dbReference type="UniProtKB" id="Q9LZF1"/>
    </source>
</evidence>
<evidence type="ECO:0000250" key="2">
    <source>
        <dbReference type="UniProtKB" id="Q9SZN7"/>
    </source>
</evidence>
<evidence type="ECO:0000255" key="3">
    <source>
        <dbReference type="PROSITE-ProRule" id="PRU00280"/>
    </source>
</evidence>
<evidence type="ECO:0000256" key="4">
    <source>
        <dbReference type="SAM" id="MobiDB-lite"/>
    </source>
</evidence>
<evidence type="ECO:0000303" key="5">
    <source>
    </source>
</evidence>
<evidence type="ECO:0000303" key="6">
    <source>
    </source>
</evidence>
<evidence type="ECO:0000305" key="7"/>
<evidence type="ECO:0000305" key="8">
    <source>
    </source>
</evidence>
<evidence type="ECO:0000312" key="9">
    <source>
        <dbReference type="Araport" id="AT5G52750"/>
    </source>
</evidence>
<evidence type="ECO:0000312" key="10">
    <source>
        <dbReference type="EMBL" id="AAN60294.1"/>
    </source>
</evidence>
<evidence type="ECO:0000312" key="11">
    <source>
        <dbReference type="EMBL" id="BAA98093.1"/>
    </source>
</evidence>
<proteinExistence type="evidence at transcript level"/>